<sequence length="149" mass="17192">MSEKQNEKVYDLSFFMPGQTIEAEEVEVPISKRFVDKEGNVVPFIFKAITTERIDELEKENTTYKNVKGRGRVKELDSQRFYARIAVETTVYPNFKAKELREAYKTEDPVEVAKRVLSVGGEYANWLNKAIEINGFDDDLEDLEEAAKN</sequence>
<accession>P45930</accession>
<name>YQBN_BACSU</name>
<evidence type="ECO:0000305" key="1"/>
<evidence type="ECO:0007829" key="2">
    <source>
        <dbReference type="PDB" id="3KLU"/>
    </source>
</evidence>
<proteinExistence type="evidence at protein level"/>
<gene>
    <name type="primary">yqbN</name>
    <name type="ordered locus">BSU26040</name>
</gene>
<comment type="similarity">
    <text evidence="1">To B.subtilis XkdN.</text>
</comment>
<reference key="1">
    <citation type="journal article" date="1995" name="Microbiology">
        <title>Complete nucleotide sequence of a skin element excised by DNA rearrangement during sporulation in Bacillus subtilis.</title>
        <authorList>
            <person name="Takemaru K."/>
            <person name="Mizuno M."/>
            <person name="Sato T."/>
            <person name="Takeuchi M."/>
            <person name="Kobayashi Y."/>
        </authorList>
    </citation>
    <scope>NUCLEOTIDE SEQUENCE [GENOMIC DNA]</scope>
    <source>
        <strain>168 / JH642</strain>
    </source>
</reference>
<reference key="2">
    <citation type="journal article" date="1996" name="Microbiology">
        <title>Systematic sequencing of the 283 kb 210 degrees-232 degrees region of the Bacillus subtilis genome containing the skin element and many sporulation genes.</title>
        <authorList>
            <person name="Mizuno M."/>
            <person name="Masuda S."/>
            <person name="Takemaru K."/>
            <person name="Hosono S."/>
            <person name="Sato T."/>
            <person name="Takeuchi M."/>
            <person name="Kobayashi Y."/>
        </authorList>
    </citation>
    <scope>NUCLEOTIDE SEQUENCE [GENOMIC DNA]</scope>
    <source>
        <strain>168 / JH642</strain>
    </source>
</reference>
<reference key="3">
    <citation type="journal article" date="1997" name="Nature">
        <title>The complete genome sequence of the Gram-positive bacterium Bacillus subtilis.</title>
        <authorList>
            <person name="Kunst F."/>
            <person name="Ogasawara N."/>
            <person name="Moszer I."/>
            <person name="Albertini A.M."/>
            <person name="Alloni G."/>
            <person name="Azevedo V."/>
            <person name="Bertero M.G."/>
            <person name="Bessieres P."/>
            <person name="Bolotin A."/>
            <person name="Borchert S."/>
            <person name="Borriss R."/>
            <person name="Boursier L."/>
            <person name="Brans A."/>
            <person name="Braun M."/>
            <person name="Brignell S.C."/>
            <person name="Bron S."/>
            <person name="Brouillet S."/>
            <person name="Bruschi C.V."/>
            <person name="Caldwell B."/>
            <person name="Capuano V."/>
            <person name="Carter N.M."/>
            <person name="Choi S.-K."/>
            <person name="Codani J.-J."/>
            <person name="Connerton I.F."/>
            <person name="Cummings N.J."/>
            <person name="Daniel R.A."/>
            <person name="Denizot F."/>
            <person name="Devine K.M."/>
            <person name="Duesterhoeft A."/>
            <person name="Ehrlich S.D."/>
            <person name="Emmerson P.T."/>
            <person name="Entian K.-D."/>
            <person name="Errington J."/>
            <person name="Fabret C."/>
            <person name="Ferrari E."/>
            <person name="Foulger D."/>
            <person name="Fritz C."/>
            <person name="Fujita M."/>
            <person name="Fujita Y."/>
            <person name="Fuma S."/>
            <person name="Galizzi A."/>
            <person name="Galleron N."/>
            <person name="Ghim S.-Y."/>
            <person name="Glaser P."/>
            <person name="Goffeau A."/>
            <person name="Golightly E.J."/>
            <person name="Grandi G."/>
            <person name="Guiseppi G."/>
            <person name="Guy B.J."/>
            <person name="Haga K."/>
            <person name="Haiech J."/>
            <person name="Harwood C.R."/>
            <person name="Henaut A."/>
            <person name="Hilbert H."/>
            <person name="Holsappel S."/>
            <person name="Hosono S."/>
            <person name="Hullo M.-F."/>
            <person name="Itaya M."/>
            <person name="Jones L.-M."/>
            <person name="Joris B."/>
            <person name="Karamata D."/>
            <person name="Kasahara Y."/>
            <person name="Klaerr-Blanchard M."/>
            <person name="Klein C."/>
            <person name="Kobayashi Y."/>
            <person name="Koetter P."/>
            <person name="Koningstein G."/>
            <person name="Krogh S."/>
            <person name="Kumano M."/>
            <person name="Kurita K."/>
            <person name="Lapidus A."/>
            <person name="Lardinois S."/>
            <person name="Lauber J."/>
            <person name="Lazarevic V."/>
            <person name="Lee S.-M."/>
            <person name="Levine A."/>
            <person name="Liu H."/>
            <person name="Masuda S."/>
            <person name="Mauel C."/>
            <person name="Medigue C."/>
            <person name="Medina N."/>
            <person name="Mellado R.P."/>
            <person name="Mizuno M."/>
            <person name="Moestl D."/>
            <person name="Nakai S."/>
            <person name="Noback M."/>
            <person name="Noone D."/>
            <person name="O'Reilly M."/>
            <person name="Ogawa K."/>
            <person name="Ogiwara A."/>
            <person name="Oudega B."/>
            <person name="Park S.-H."/>
            <person name="Parro V."/>
            <person name="Pohl T.M."/>
            <person name="Portetelle D."/>
            <person name="Porwollik S."/>
            <person name="Prescott A.M."/>
            <person name="Presecan E."/>
            <person name="Pujic P."/>
            <person name="Purnelle B."/>
            <person name="Rapoport G."/>
            <person name="Rey M."/>
            <person name="Reynolds S."/>
            <person name="Rieger M."/>
            <person name="Rivolta C."/>
            <person name="Rocha E."/>
            <person name="Roche B."/>
            <person name="Rose M."/>
            <person name="Sadaie Y."/>
            <person name="Sato T."/>
            <person name="Scanlan E."/>
            <person name="Schleich S."/>
            <person name="Schroeter R."/>
            <person name="Scoffone F."/>
            <person name="Sekiguchi J."/>
            <person name="Sekowska A."/>
            <person name="Seror S.J."/>
            <person name="Serror P."/>
            <person name="Shin B.-S."/>
            <person name="Soldo B."/>
            <person name="Sorokin A."/>
            <person name="Tacconi E."/>
            <person name="Takagi T."/>
            <person name="Takahashi H."/>
            <person name="Takemaru K."/>
            <person name="Takeuchi M."/>
            <person name="Tamakoshi A."/>
            <person name="Tanaka T."/>
            <person name="Terpstra P."/>
            <person name="Tognoni A."/>
            <person name="Tosato V."/>
            <person name="Uchiyama S."/>
            <person name="Vandenbol M."/>
            <person name="Vannier F."/>
            <person name="Vassarotti A."/>
            <person name="Viari A."/>
            <person name="Wambutt R."/>
            <person name="Wedler E."/>
            <person name="Wedler H."/>
            <person name="Weitzenegger T."/>
            <person name="Winters P."/>
            <person name="Wipat A."/>
            <person name="Yamamoto H."/>
            <person name="Yamane K."/>
            <person name="Yasumoto K."/>
            <person name="Yata K."/>
            <person name="Yoshida K."/>
            <person name="Yoshikawa H.-F."/>
            <person name="Zumstein E."/>
            <person name="Yoshikawa H."/>
            <person name="Danchin A."/>
        </authorList>
    </citation>
    <scope>NUCLEOTIDE SEQUENCE [LARGE SCALE GENOMIC DNA]</scope>
    <source>
        <strain>168</strain>
    </source>
</reference>
<reference key="4">
    <citation type="journal article" date="2009" name="Microbiology">
        <title>From a consortium sequence to a unified sequence: the Bacillus subtilis 168 reference genome a decade later.</title>
        <authorList>
            <person name="Barbe V."/>
            <person name="Cruveiller S."/>
            <person name="Kunst F."/>
            <person name="Lenoble P."/>
            <person name="Meurice G."/>
            <person name="Sekowska A."/>
            <person name="Vallenet D."/>
            <person name="Wang T."/>
            <person name="Moszer I."/>
            <person name="Medigue C."/>
            <person name="Danchin A."/>
        </authorList>
    </citation>
    <scope>SEQUENCE REVISION</scope>
</reference>
<reference key="5">
    <citation type="journal article" date="1995" name="Gene">
        <title>Analysis of a Bacillus subtilis genome fragment using a co-operative computer system prototype.</title>
        <authorList>
            <person name="Medigue C."/>
            <person name="Moszer I."/>
            <person name="Viari A."/>
            <person name="Danchin A."/>
        </authorList>
    </citation>
    <scope>IDENTIFICATION</scope>
</reference>
<reference key="6">
    <citation type="submission" date="2008-08" db="PDB data bank">
        <title>Crystal structure of the protein yqbN. Northeast structural genomics consortium target SR445.</title>
        <authorList>
            <consortium name="Northeast structural genomics consortium (NESG)"/>
        </authorList>
    </citation>
    <scope>X-RAY CRYSTALLOGRAPHY (2.2 ANGSTROMS)</scope>
</reference>
<organism>
    <name type="scientific">Bacillus subtilis (strain 168)</name>
    <dbReference type="NCBI Taxonomy" id="224308"/>
    <lineage>
        <taxon>Bacteria</taxon>
        <taxon>Bacillati</taxon>
        <taxon>Bacillota</taxon>
        <taxon>Bacilli</taxon>
        <taxon>Bacillales</taxon>
        <taxon>Bacillaceae</taxon>
        <taxon>Bacillus</taxon>
    </lineage>
</organism>
<protein>
    <recommendedName>
        <fullName>Uncharacterized protein YqbN</fullName>
    </recommendedName>
</protein>
<feature type="chain" id="PRO_0000049765" description="Uncharacterized protein YqbN">
    <location>
        <begin position="1"/>
        <end position="149"/>
    </location>
</feature>
<feature type="sequence conflict" description="In Ref. 1; BAA06946 and 2; BAA12410." evidence="1" ref="1 2">
    <original>K</original>
    <variation>N</variation>
    <location>
        <position position="4"/>
    </location>
</feature>
<feature type="sequence conflict" description="In Ref. 1; BAA06946 and 2; BAA12410." evidence="1" ref="1 2">
    <original>E</original>
    <variation>D</variation>
    <location>
        <position position="22"/>
    </location>
</feature>
<feature type="sequence conflict" description="In Ref. 1; BAA06946 and 2; BAA12410." evidence="1" ref="1 2">
    <original>E</original>
    <variation>D</variation>
    <location>
        <position position="52"/>
    </location>
</feature>
<feature type="sequence conflict" description="In Ref. 1; BAA06946 and 2; BAA12410." evidence="1" ref="1 2">
    <original>N</original>
    <variation>T</variation>
    <location>
        <position position="94"/>
    </location>
</feature>
<feature type="helix" evidence="2">
    <location>
        <begin position="12"/>
        <end position="15"/>
    </location>
</feature>
<feature type="turn" evidence="2">
    <location>
        <begin position="17"/>
        <end position="19"/>
    </location>
</feature>
<feature type="strand" evidence="2">
    <location>
        <begin position="26"/>
        <end position="28"/>
    </location>
</feature>
<feature type="strand" evidence="2">
    <location>
        <begin position="44"/>
        <end position="46"/>
    </location>
</feature>
<feature type="helix" evidence="2">
    <location>
        <begin position="51"/>
        <end position="60"/>
    </location>
</feature>
<feature type="helix" evidence="2">
    <location>
        <begin position="78"/>
        <end position="89"/>
    </location>
</feature>
<feature type="strand" evidence="2">
    <location>
        <begin position="90"/>
        <end position="93"/>
    </location>
</feature>
<feature type="helix" evidence="2">
    <location>
        <begin position="98"/>
        <end position="103"/>
    </location>
</feature>
<feature type="helix" evidence="2">
    <location>
        <begin position="109"/>
        <end position="116"/>
    </location>
</feature>
<feature type="helix" evidence="2">
    <location>
        <begin position="120"/>
        <end position="133"/>
    </location>
</feature>
<dbReference type="EMBL" id="D32216">
    <property type="protein sequence ID" value="BAA06946.1"/>
    <property type="molecule type" value="Genomic_DNA"/>
</dbReference>
<dbReference type="EMBL" id="D84432">
    <property type="protein sequence ID" value="BAA12410.1"/>
    <property type="molecule type" value="Genomic_DNA"/>
</dbReference>
<dbReference type="EMBL" id="AL009126">
    <property type="status" value="NOT_ANNOTATED_CDS"/>
    <property type="molecule type" value="Genomic_DNA"/>
</dbReference>
<dbReference type="PIR" id="A69948">
    <property type="entry name" value="A69948"/>
</dbReference>
<dbReference type="RefSeq" id="WP_003229933.1">
    <property type="nucleotide sequence ID" value="NZ_OZ025638.1"/>
</dbReference>
<dbReference type="PDB" id="3KLU">
    <property type="method" value="X-ray"/>
    <property type="resolution" value="2.20 A"/>
    <property type="chains" value="A=1-149"/>
</dbReference>
<dbReference type="PDBsum" id="3KLU"/>
<dbReference type="SMR" id="P45930"/>
<dbReference type="FunCoup" id="P45930">
    <property type="interactions" value="74"/>
</dbReference>
<dbReference type="PATRIC" id="fig|224308.179.peg.2830"/>
<dbReference type="InParanoid" id="P45930"/>
<dbReference type="OrthoDB" id="1807498at2"/>
<dbReference type="EvolutionaryTrace" id="P45930"/>
<dbReference type="Proteomes" id="UP000001570">
    <property type="component" value="Chromosome"/>
</dbReference>
<dbReference type="Gene3D" id="3.30.2220.30">
    <property type="match status" value="1"/>
</dbReference>
<dbReference type="InterPro" id="IPR014986">
    <property type="entry name" value="XkdN-like"/>
</dbReference>
<dbReference type="InterPro" id="IPR038559">
    <property type="entry name" value="XkdN-like_sf"/>
</dbReference>
<dbReference type="Pfam" id="PF08890">
    <property type="entry name" value="Phage_TAC_5"/>
    <property type="match status" value="1"/>
</dbReference>
<keyword id="KW-0002">3D-structure</keyword>
<keyword id="KW-1185">Reference proteome</keyword>